<reference key="1">
    <citation type="submission" date="2008-10" db="EMBL/GenBank/DDBJ databases">
        <title>Genome sequence of Bacillus anthracis str. CDC 684.</title>
        <authorList>
            <person name="Dodson R.J."/>
            <person name="Munk A.C."/>
            <person name="Brettin T."/>
            <person name="Bruce D."/>
            <person name="Detter C."/>
            <person name="Tapia R."/>
            <person name="Han C."/>
            <person name="Sutton G."/>
            <person name="Sims D."/>
        </authorList>
    </citation>
    <scope>NUCLEOTIDE SEQUENCE [LARGE SCALE GENOMIC DNA]</scope>
    <source>
        <strain>CDC 684 / NRRL 3495</strain>
    </source>
</reference>
<sequence>MNIEQFQSMLEEKGITLSSRQLEQFEIYFETLVEWNEKMNLTAITEKEEVYLKHFFDSITAAFYYDFSKPFSICDVGAGAGFPSIPLKICFPHLKVTIVDSLQKRINFLNHLAQKLELSDVAFCHDRAETFGKKEGVREAYDIVMARAVARLSVLSELCLPLVKVGGTFIAMKGAAANEEIENGKYALEVLGGDLKEMSTFQLPFEESERNILLIEKKRKTPKKYPRKPGTPNKLPIEK</sequence>
<protein>
    <recommendedName>
        <fullName evidence="1">Ribosomal RNA small subunit methyltransferase G</fullName>
        <ecNumber evidence="1">2.1.1.-</ecNumber>
    </recommendedName>
    <alternativeName>
        <fullName evidence="1">16S rRNA 7-methylguanosine methyltransferase</fullName>
        <shortName evidence="1">16S rRNA m7G methyltransferase</shortName>
    </alternativeName>
</protein>
<feature type="chain" id="PRO_1000118174" description="Ribosomal RNA small subunit methyltransferase G">
    <location>
        <begin position="1"/>
        <end position="239"/>
    </location>
</feature>
<feature type="binding site" evidence="1">
    <location>
        <position position="77"/>
    </location>
    <ligand>
        <name>S-adenosyl-L-methionine</name>
        <dbReference type="ChEBI" id="CHEBI:59789"/>
    </ligand>
</feature>
<feature type="binding site" evidence="1">
    <location>
        <position position="82"/>
    </location>
    <ligand>
        <name>S-adenosyl-L-methionine</name>
        <dbReference type="ChEBI" id="CHEBI:59789"/>
    </ligand>
</feature>
<feature type="binding site" evidence="1">
    <location>
        <begin position="128"/>
        <end position="129"/>
    </location>
    <ligand>
        <name>S-adenosyl-L-methionine</name>
        <dbReference type="ChEBI" id="CHEBI:59789"/>
    </ligand>
</feature>
<feature type="binding site" evidence="1">
    <location>
        <position position="147"/>
    </location>
    <ligand>
        <name>S-adenosyl-L-methionine</name>
        <dbReference type="ChEBI" id="CHEBI:59789"/>
    </ligand>
</feature>
<dbReference type="EC" id="2.1.1.-" evidence="1"/>
<dbReference type="EMBL" id="CP001215">
    <property type="protein sequence ID" value="ACP15815.1"/>
    <property type="molecule type" value="Genomic_DNA"/>
</dbReference>
<dbReference type="RefSeq" id="WP_001019621.1">
    <property type="nucleotide sequence ID" value="NC_012581.1"/>
</dbReference>
<dbReference type="SMR" id="C3LGT9"/>
<dbReference type="GeneID" id="93005640"/>
<dbReference type="KEGG" id="bah:BAMEG_5783"/>
<dbReference type="HOGENOM" id="CLU_065341_0_2_9"/>
<dbReference type="GO" id="GO:0005829">
    <property type="term" value="C:cytosol"/>
    <property type="evidence" value="ECO:0007669"/>
    <property type="project" value="TreeGrafter"/>
</dbReference>
<dbReference type="GO" id="GO:0070043">
    <property type="term" value="F:rRNA (guanine-N7-)-methyltransferase activity"/>
    <property type="evidence" value="ECO:0007669"/>
    <property type="project" value="UniProtKB-UniRule"/>
</dbReference>
<dbReference type="CDD" id="cd02440">
    <property type="entry name" value="AdoMet_MTases"/>
    <property type="match status" value="1"/>
</dbReference>
<dbReference type="FunFam" id="3.40.50.150:FF:000041">
    <property type="entry name" value="Ribosomal RNA small subunit methyltransferase G"/>
    <property type="match status" value="1"/>
</dbReference>
<dbReference type="Gene3D" id="3.40.50.150">
    <property type="entry name" value="Vaccinia Virus protein VP39"/>
    <property type="match status" value="1"/>
</dbReference>
<dbReference type="HAMAP" id="MF_00074">
    <property type="entry name" value="16SrRNA_methyltr_G"/>
    <property type="match status" value="1"/>
</dbReference>
<dbReference type="InterPro" id="IPR003682">
    <property type="entry name" value="rRNA_ssu_MeTfrase_G"/>
</dbReference>
<dbReference type="InterPro" id="IPR029063">
    <property type="entry name" value="SAM-dependent_MTases_sf"/>
</dbReference>
<dbReference type="NCBIfam" id="TIGR00138">
    <property type="entry name" value="rsmG_gidB"/>
    <property type="match status" value="1"/>
</dbReference>
<dbReference type="PANTHER" id="PTHR31760">
    <property type="entry name" value="S-ADENOSYL-L-METHIONINE-DEPENDENT METHYLTRANSFERASES SUPERFAMILY PROTEIN"/>
    <property type="match status" value="1"/>
</dbReference>
<dbReference type="PANTHER" id="PTHR31760:SF0">
    <property type="entry name" value="S-ADENOSYL-L-METHIONINE-DEPENDENT METHYLTRANSFERASES SUPERFAMILY PROTEIN"/>
    <property type="match status" value="1"/>
</dbReference>
<dbReference type="Pfam" id="PF02527">
    <property type="entry name" value="GidB"/>
    <property type="match status" value="1"/>
</dbReference>
<dbReference type="PIRSF" id="PIRSF003078">
    <property type="entry name" value="GidB"/>
    <property type="match status" value="1"/>
</dbReference>
<dbReference type="SUPFAM" id="SSF53335">
    <property type="entry name" value="S-adenosyl-L-methionine-dependent methyltransferases"/>
    <property type="match status" value="1"/>
</dbReference>
<organism>
    <name type="scientific">Bacillus anthracis (strain CDC 684 / NRRL 3495)</name>
    <dbReference type="NCBI Taxonomy" id="568206"/>
    <lineage>
        <taxon>Bacteria</taxon>
        <taxon>Bacillati</taxon>
        <taxon>Bacillota</taxon>
        <taxon>Bacilli</taxon>
        <taxon>Bacillales</taxon>
        <taxon>Bacillaceae</taxon>
        <taxon>Bacillus</taxon>
        <taxon>Bacillus cereus group</taxon>
    </lineage>
</organism>
<keyword id="KW-0963">Cytoplasm</keyword>
<keyword id="KW-0489">Methyltransferase</keyword>
<keyword id="KW-0698">rRNA processing</keyword>
<keyword id="KW-0949">S-adenosyl-L-methionine</keyword>
<keyword id="KW-0808">Transferase</keyword>
<evidence type="ECO:0000255" key="1">
    <source>
        <dbReference type="HAMAP-Rule" id="MF_00074"/>
    </source>
</evidence>
<comment type="function">
    <text evidence="1">Specifically methylates the N7 position of guanine in position 535 of 16S rRNA.</text>
</comment>
<comment type="subcellular location">
    <subcellularLocation>
        <location evidence="1">Cytoplasm</location>
    </subcellularLocation>
</comment>
<comment type="similarity">
    <text evidence="1">Belongs to the methyltransferase superfamily. RNA methyltransferase RsmG family.</text>
</comment>
<accession>C3LGT9</accession>
<name>RSMG_BACAC</name>
<proteinExistence type="inferred from homology"/>
<gene>
    <name evidence="1" type="primary">rsmG</name>
    <name type="ordered locus">BAMEG_5783</name>
</gene>